<feature type="chain" id="PRO_1000015283" description="S-adenosylmethionine:tRNA ribosyltransferase-isomerase">
    <location>
        <begin position="1"/>
        <end position="351"/>
    </location>
</feature>
<sequence>MRVDAFDFDLPSERIALRPARPRDAARMLVVDAGNIVDAGVRDLPQWLRPGDCLVFNDTRVIPAQLEGLRGEAKIGATLHKRIDLRRWQAFVRNAKRLRVGETVDFGSGVAALAEERLADGSFVLAFAGDEPVELLLERAGTMPLPPYIAGKRGADEADRDDYQTMFAREDGAVAAPTAALHFTPELLAALAAAGIATETLTLHVGAGTFLPVKADDTDDHVMHAEWGRIEADTAARLNAVRASGGRVIAVGTTSLRLLESAARDDGTITPFAGDTSIFITPGYRFKAIDGLMTNFHLPRSTLFMLVSALMGLETMQAAYAHAIAREYRFYSYGDASLLLPRQSGRSRTLS</sequence>
<proteinExistence type="inferred from homology"/>
<dbReference type="EC" id="2.4.99.17" evidence="1"/>
<dbReference type="EMBL" id="CP000356">
    <property type="protein sequence ID" value="ABF53900.1"/>
    <property type="molecule type" value="Genomic_DNA"/>
</dbReference>
<dbReference type="RefSeq" id="WP_011542476.1">
    <property type="nucleotide sequence ID" value="NC_008048.1"/>
</dbReference>
<dbReference type="SMR" id="Q1GR22"/>
<dbReference type="STRING" id="317655.Sala_2191"/>
<dbReference type="KEGG" id="sal:Sala_2191"/>
<dbReference type="eggNOG" id="COG0809">
    <property type="taxonomic scope" value="Bacteria"/>
</dbReference>
<dbReference type="HOGENOM" id="CLU_039110_1_1_5"/>
<dbReference type="OrthoDB" id="9805933at2"/>
<dbReference type="UniPathway" id="UPA00392"/>
<dbReference type="Proteomes" id="UP000006578">
    <property type="component" value="Chromosome"/>
</dbReference>
<dbReference type="GO" id="GO:0005737">
    <property type="term" value="C:cytoplasm"/>
    <property type="evidence" value="ECO:0007669"/>
    <property type="project" value="UniProtKB-SubCell"/>
</dbReference>
<dbReference type="GO" id="GO:0051075">
    <property type="term" value="F:S-adenosylmethionine:tRNA ribosyltransferase-isomerase activity"/>
    <property type="evidence" value="ECO:0007669"/>
    <property type="project" value="UniProtKB-EC"/>
</dbReference>
<dbReference type="GO" id="GO:0008616">
    <property type="term" value="P:queuosine biosynthetic process"/>
    <property type="evidence" value="ECO:0007669"/>
    <property type="project" value="UniProtKB-UniRule"/>
</dbReference>
<dbReference type="GO" id="GO:0002099">
    <property type="term" value="P:tRNA wobble guanine modification"/>
    <property type="evidence" value="ECO:0007669"/>
    <property type="project" value="TreeGrafter"/>
</dbReference>
<dbReference type="FunFam" id="3.40.1780.10:FF:000001">
    <property type="entry name" value="S-adenosylmethionine:tRNA ribosyltransferase-isomerase"/>
    <property type="match status" value="1"/>
</dbReference>
<dbReference type="Gene3D" id="2.40.10.240">
    <property type="entry name" value="QueA-like"/>
    <property type="match status" value="1"/>
</dbReference>
<dbReference type="Gene3D" id="3.40.1780.10">
    <property type="entry name" value="QueA-like"/>
    <property type="match status" value="1"/>
</dbReference>
<dbReference type="HAMAP" id="MF_00113">
    <property type="entry name" value="QueA"/>
    <property type="match status" value="1"/>
</dbReference>
<dbReference type="InterPro" id="IPR003699">
    <property type="entry name" value="QueA"/>
</dbReference>
<dbReference type="InterPro" id="IPR042118">
    <property type="entry name" value="QueA_dom1"/>
</dbReference>
<dbReference type="InterPro" id="IPR042119">
    <property type="entry name" value="QueA_dom2"/>
</dbReference>
<dbReference type="InterPro" id="IPR036100">
    <property type="entry name" value="QueA_sf"/>
</dbReference>
<dbReference type="NCBIfam" id="NF001140">
    <property type="entry name" value="PRK00147.1"/>
    <property type="match status" value="1"/>
</dbReference>
<dbReference type="NCBIfam" id="TIGR00113">
    <property type="entry name" value="queA"/>
    <property type="match status" value="1"/>
</dbReference>
<dbReference type="PANTHER" id="PTHR30307">
    <property type="entry name" value="S-ADENOSYLMETHIONINE:TRNA RIBOSYLTRANSFERASE-ISOMERASE"/>
    <property type="match status" value="1"/>
</dbReference>
<dbReference type="PANTHER" id="PTHR30307:SF0">
    <property type="entry name" value="S-ADENOSYLMETHIONINE:TRNA RIBOSYLTRANSFERASE-ISOMERASE"/>
    <property type="match status" value="1"/>
</dbReference>
<dbReference type="Pfam" id="PF02547">
    <property type="entry name" value="Queuosine_synth"/>
    <property type="match status" value="1"/>
</dbReference>
<dbReference type="SUPFAM" id="SSF111337">
    <property type="entry name" value="QueA-like"/>
    <property type="match status" value="1"/>
</dbReference>
<reference key="1">
    <citation type="journal article" date="2009" name="Proc. Natl. Acad. Sci. U.S.A.">
        <title>The genomic basis of trophic strategy in marine bacteria.</title>
        <authorList>
            <person name="Lauro F.M."/>
            <person name="McDougald D."/>
            <person name="Thomas T."/>
            <person name="Williams T.J."/>
            <person name="Egan S."/>
            <person name="Rice S."/>
            <person name="DeMaere M.Z."/>
            <person name="Ting L."/>
            <person name="Ertan H."/>
            <person name="Johnson J."/>
            <person name="Ferriera S."/>
            <person name="Lapidus A."/>
            <person name="Anderson I."/>
            <person name="Kyrpides N."/>
            <person name="Munk A.C."/>
            <person name="Detter C."/>
            <person name="Han C.S."/>
            <person name="Brown M.V."/>
            <person name="Robb F.T."/>
            <person name="Kjelleberg S."/>
            <person name="Cavicchioli R."/>
        </authorList>
    </citation>
    <scope>NUCLEOTIDE SEQUENCE [LARGE SCALE GENOMIC DNA]</scope>
    <source>
        <strain>DSM 13593 / LMG 18877 / RB2256</strain>
    </source>
</reference>
<name>QUEA_SPHAL</name>
<accession>Q1GR22</accession>
<comment type="function">
    <text evidence="1">Transfers and isomerizes the ribose moiety from AdoMet to the 7-aminomethyl group of 7-deazaguanine (preQ1-tRNA) to give epoxyqueuosine (oQ-tRNA).</text>
</comment>
<comment type="catalytic activity">
    <reaction evidence="1">
        <text>7-aminomethyl-7-carbaguanosine(34) in tRNA + S-adenosyl-L-methionine = epoxyqueuosine(34) in tRNA + adenine + L-methionine + 2 H(+)</text>
        <dbReference type="Rhea" id="RHEA:32155"/>
        <dbReference type="Rhea" id="RHEA-COMP:10342"/>
        <dbReference type="Rhea" id="RHEA-COMP:18582"/>
        <dbReference type="ChEBI" id="CHEBI:15378"/>
        <dbReference type="ChEBI" id="CHEBI:16708"/>
        <dbReference type="ChEBI" id="CHEBI:57844"/>
        <dbReference type="ChEBI" id="CHEBI:59789"/>
        <dbReference type="ChEBI" id="CHEBI:82833"/>
        <dbReference type="ChEBI" id="CHEBI:194443"/>
        <dbReference type="EC" id="2.4.99.17"/>
    </reaction>
</comment>
<comment type="pathway">
    <text evidence="1">tRNA modification; tRNA-queuosine biosynthesis.</text>
</comment>
<comment type="subunit">
    <text evidence="1">Monomer.</text>
</comment>
<comment type="subcellular location">
    <subcellularLocation>
        <location evidence="1">Cytoplasm</location>
    </subcellularLocation>
</comment>
<comment type="similarity">
    <text evidence="1">Belongs to the QueA family.</text>
</comment>
<gene>
    <name evidence="1" type="primary">queA</name>
    <name type="ordered locus">Sala_2191</name>
</gene>
<organism>
    <name type="scientific">Sphingopyxis alaskensis (strain DSM 13593 / LMG 18877 / RB2256)</name>
    <name type="common">Sphingomonas alaskensis</name>
    <dbReference type="NCBI Taxonomy" id="317655"/>
    <lineage>
        <taxon>Bacteria</taxon>
        <taxon>Pseudomonadati</taxon>
        <taxon>Pseudomonadota</taxon>
        <taxon>Alphaproteobacteria</taxon>
        <taxon>Sphingomonadales</taxon>
        <taxon>Sphingomonadaceae</taxon>
        <taxon>Sphingopyxis</taxon>
    </lineage>
</organism>
<evidence type="ECO:0000255" key="1">
    <source>
        <dbReference type="HAMAP-Rule" id="MF_00113"/>
    </source>
</evidence>
<protein>
    <recommendedName>
        <fullName evidence="1">S-adenosylmethionine:tRNA ribosyltransferase-isomerase</fullName>
        <ecNumber evidence="1">2.4.99.17</ecNumber>
    </recommendedName>
    <alternativeName>
        <fullName evidence="1">Queuosine biosynthesis protein QueA</fullName>
    </alternativeName>
</protein>
<keyword id="KW-0963">Cytoplasm</keyword>
<keyword id="KW-0671">Queuosine biosynthesis</keyword>
<keyword id="KW-1185">Reference proteome</keyword>
<keyword id="KW-0949">S-adenosyl-L-methionine</keyword>
<keyword id="KW-0808">Transferase</keyword>